<sequence length="220" mass="20301">SSSTNNSSGSSSTNNSSGSSSTNNSSGSSSTNNASGSSSSNNTSGSSRNNSSGSSSSNNSSSGSSAGNSSGSSSSNSSGSSGIGSLSRNSSSSSSSQAAGSSSSRRVSADGSSSSSSASNSAAAQNSASSSETINADGSENESSSSSSSAAQNSATRSQVINADGSQSSSSSSSSASNQASATSSSSVSADGSESESSSSSSSSSSSSSESSSSSSWSSA</sequence>
<organism>
    <name type="scientific">Galleria mellonella</name>
    <name type="common">Greater wax moth</name>
    <dbReference type="NCBI Taxonomy" id="7137"/>
    <lineage>
        <taxon>Eukaryota</taxon>
        <taxon>Metazoa</taxon>
        <taxon>Ecdysozoa</taxon>
        <taxon>Arthropoda</taxon>
        <taxon>Hexapoda</taxon>
        <taxon>Insecta</taxon>
        <taxon>Pterygota</taxon>
        <taxon>Neoptera</taxon>
        <taxon>Endopterygota</taxon>
        <taxon>Lepidoptera</taxon>
        <taxon>Glossata</taxon>
        <taxon>Ditrysia</taxon>
        <taxon>Pyraloidea</taxon>
        <taxon>Pyralidae</taxon>
        <taxon>Galleriinae</taxon>
        <taxon>Galleria</taxon>
    </lineage>
</organism>
<proteinExistence type="evidence at transcript level"/>
<accession>O96615</accession>
<comment type="function">
    <text>Provides the silk fibroin thread with a sticky coating. Acts as a cement by sticking silk threads together.</text>
</comment>
<comment type="subcellular location">
    <subcellularLocation>
        <location>Secreted</location>
    </subcellularLocation>
</comment>
<comment type="tissue specificity">
    <text>Produced exclusively in the middle (MSG) section of silk glands.</text>
</comment>
<name>SER2_GALME</name>
<evidence type="ECO:0000256" key="1">
    <source>
        <dbReference type="SAM" id="MobiDB-lite"/>
    </source>
</evidence>
<gene>
    <name type="primary">SER2</name>
    <name type="synonym">SER-2</name>
</gene>
<reference key="1">
    <citation type="journal article" date="1992" name="Insect Biochem. Mol. Biol.">
        <title>Silk gland specific cDNAs from Galleria mellonella L.</title>
        <authorList>
            <person name="Zurovec M."/>
            <person name="Sehnal F."/>
            <person name="Scheller K."/>
            <person name="Kumaran A.K."/>
        </authorList>
    </citation>
    <scope>NUCLEOTIDE SEQUENCE [MRNA]</scope>
    <source>
        <tissue>Middle silk gland</tissue>
    </source>
</reference>
<feature type="chain" id="PRO_0000097689" description="Sericin-2">
    <location>
        <begin position="1" status="less than"/>
        <end position="220"/>
    </location>
</feature>
<feature type="region of interest" description="Disordered" evidence="1">
    <location>
        <begin position="1"/>
        <end position="220"/>
    </location>
</feature>
<feature type="compositionally biased region" description="Low complexity" evidence="1">
    <location>
        <begin position="1"/>
        <end position="131"/>
    </location>
</feature>
<feature type="compositionally biased region" description="Low complexity" evidence="1">
    <location>
        <begin position="141"/>
        <end position="155"/>
    </location>
</feature>
<feature type="compositionally biased region" description="Polar residues" evidence="1">
    <location>
        <begin position="156"/>
        <end position="165"/>
    </location>
</feature>
<feature type="compositionally biased region" description="Low complexity" evidence="1">
    <location>
        <begin position="166"/>
        <end position="220"/>
    </location>
</feature>
<feature type="non-terminal residue">
    <location>
        <position position="1"/>
    </location>
</feature>
<keyword id="KW-1185">Reference proteome</keyword>
<keyword id="KW-0964">Secreted</keyword>
<keyword id="KW-0737">Silk protein</keyword>
<dbReference type="EMBL" id="AF095242">
    <property type="protein sequence ID" value="AAC79079.1"/>
    <property type="molecule type" value="mRNA"/>
</dbReference>
<dbReference type="InParanoid" id="O96615"/>
<dbReference type="Proteomes" id="UP000504614">
    <property type="component" value="Unplaced"/>
</dbReference>
<dbReference type="GO" id="GO:0005576">
    <property type="term" value="C:extracellular region"/>
    <property type="evidence" value="ECO:0007669"/>
    <property type="project" value="UniProtKB-SubCell"/>
</dbReference>
<protein>
    <recommendedName>
        <fullName>Sericin-2</fullName>
    </recommendedName>
    <alternativeName>
        <fullName>Silk gum protein 2</fullName>
    </alternativeName>
</protein>